<protein>
    <recommendedName>
        <fullName>UPF0213 protein ORF82</fullName>
    </recommendedName>
</protein>
<gene>
    <name type="ORF">ORF82</name>
</gene>
<dbReference type="EMBL" id="U75930">
    <property type="protein sequence ID" value="AAC59081.1"/>
    <property type="molecule type" value="Genomic_DNA"/>
</dbReference>
<dbReference type="RefSeq" id="NP_046238.1">
    <property type="nucleotide sequence ID" value="NC_001875.2"/>
</dbReference>
<dbReference type="SMR" id="O10332"/>
<dbReference type="KEGG" id="vg:911974"/>
<dbReference type="OrthoDB" id="27013at10239"/>
<dbReference type="Proteomes" id="UP000009248">
    <property type="component" value="Genome"/>
</dbReference>
<dbReference type="CDD" id="cd10456">
    <property type="entry name" value="GIY-YIG_UPF0213"/>
    <property type="match status" value="1"/>
</dbReference>
<dbReference type="Gene3D" id="3.40.1440.10">
    <property type="entry name" value="GIY-YIG endonuclease"/>
    <property type="match status" value="1"/>
</dbReference>
<dbReference type="InterPro" id="IPR000305">
    <property type="entry name" value="GIY-YIG_endonuc"/>
</dbReference>
<dbReference type="InterPro" id="IPR035901">
    <property type="entry name" value="GIY-YIG_endonuc_sf"/>
</dbReference>
<dbReference type="InterPro" id="IPR050190">
    <property type="entry name" value="UPF0213_domain"/>
</dbReference>
<dbReference type="PANTHER" id="PTHR34477">
    <property type="entry name" value="UPF0213 PROTEIN YHBQ"/>
    <property type="match status" value="1"/>
</dbReference>
<dbReference type="PANTHER" id="PTHR34477:SF1">
    <property type="entry name" value="UPF0213 PROTEIN YHBQ"/>
    <property type="match status" value="1"/>
</dbReference>
<dbReference type="Pfam" id="PF01541">
    <property type="entry name" value="GIY-YIG"/>
    <property type="match status" value="1"/>
</dbReference>
<dbReference type="SMART" id="SM00465">
    <property type="entry name" value="GIYc"/>
    <property type="match status" value="1"/>
</dbReference>
<dbReference type="SUPFAM" id="SSF82771">
    <property type="entry name" value="GIY-YIG endonuclease"/>
    <property type="match status" value="1"/>
</dbReference>
<dbReference type="PROSITE" id="PS50164">
    <property type="entry name" value="GIY_YIG"/>
    <property type="match status" value="1"/>
</dbReference>
<comment type="similarity">
    <text evidence="2">Belongs to the UPF0213 family.</text>
</comment>
<feature type="chain" id="PRO_0000161405" description="UPF0213 protein ORF82">
    <location>
        <begin position="1"/>
        <end position="104"/>
    </location>
</feature>
<feature type="domain" description="GIY-YIG" evidence="1">
    <location>
        <begin position="7"/>
        <end position="83"/>
    </location>
</feature>
<organismHost>
    <name type="scientific">Orgyia pseudotsugata</name>
    <name type="common">Douglas-fir tussock moth</name>
    <dbReference type="NCBI Taxonomy" id="33414"/>
</organismHost>
<sequence>MSLYRSKVWCVYIVRRDDGQLYTGITSDLSRRLGEHARGVGARCLRGAKRLQLLYCSASAYDHKTAAQMEYHLKRKRGKYFKLRLIKAQPRFLHQYLSADKPLR</sequence>
<name>Y079_NPVOP</name>
<organism>
    <name type="scientific">Orgyia pseudotsugata multicapsid polyhedrosis virus</name>
    <name type="common">OpMNPV</name>
    <dbReference type="NCBI Taxonomy" id="262177"/>
    <lineage>
        <taxon>Viruses</taxon>
        <taxon>Viruses incertae sedis</taxon>
        <taxon>Naldaviricetes</taxon>
        <taxon>Lefavirales</taxon>
        <taxon>Baculoviridae</taxon>
        <taxon>Alphabaculovirus</taxon>
        <taxon>Alphabaculovirus orpseudotsugatae</taxon>
    </lineage>
</organism>
<reference key="1">
    <citation type="journal article" date="1997" name="Virology">
        <title>The sequence of the Orgyia pseudotsugata multinucleocapsid nuclear polyhedrosis virus genome.</title>
        <authorList>
            <person name="Ahrens C.H."/>
            <person name="Russell R.R."/>
            <person name="Funk C.J."/>
            <person name="Evans J."/>
            <person name="Harwood S."/>
            <person name="Rohrmann G.F."/>
        </authorList>
    </citation>
    <scope>NUCLEOTIDE SEQUENCE [LARGE SCALE GENOMIC DNA]</scope>
</reference>
<keyword id="KW-1185">Reference proteome</keyword>
<accession>O10332</accession>
<proteinExistence type="inferred from homology"/>
<evidence type="ECO:0000255" key="1">
    <source>
        <dbReference type="PROSITE-ProRule" id="PRU00977"/>
    </source>
</evidence>
<evidence type="ECO:0000305" key="2"/>